<comment type="similarity">
    <text evidence="2">To M.tuberculosis Rv0025 and Rv0739.</text>
</comment>
<name>Y0026_MYCTO</name>
<sequence>MAFDAAMSTHEDLLATIRYVRDRTGDPNAWQTGLTPTEVTAVVTSTTRSEQLDAILRKIRQRHSNLYYPAPPDREQGDAARAIADAEAALAHQNSATAQLDLQVVSAILNAHLKTVEGGESLHELQQEIEAAVRIRSDLDTPAGARDFQRFLIGKLKDIREVVATASLDAASKSALMAAWTSLYDASKGDRGDADDRGPASVGSGGAPARGAGQQPELPTRAEPDCLLDSLLLEDPGLLADDLQVPGGTSAAIPSASSTPSLPNLGGATMPGGGATPALVPGVSAPGGLPLSGLLRGVGDEPELTDFDERGQEVRDPADYEHANEPDERRADDREGADEDAGLGKSESPPQAPTTVTLPNGETVTAASPQLAAAIKAAASGTPIADAFQQQGIAIPLPGTAVANPVDSARISAGDVGVFTATPLPLALAKLFWTARFNTSQPCEGQTF</sequence>
<keyword id="KW-1185">Reference proteome</keyword>
<proteinExistence type="predicted"/>
<reference key="1">
    <citation type="journal article" date="2002" name="J. Bacteriol.">
        <title>Whole-genome comparison of Mycobacterium tuberculosis clinical and laboratory strains.</title>
        <authorList>
            <person name="Fleischmann R.D."/>
            <person name="Alland D."/>
            <person name="Eisen J.A."/>
            <person name="Carpenter L."/>
            <person name="White O."/>
            <person name="Peterson J.D."/>
            <person name="DeBoy R.T."/>
            <person name="Dodson R.J."/>
            <person name="Gwinn M.L."/>
            <person name="Haft D.H."/>
            <person name="Hickey E.K."/>
            <person name="Kolonay J.F."/>
            <person name="Nelson W.C."/>
            <person name="Umayam L.A."/>
            <person name="Ermolaeva M.D."/>
            <person name="Salzberg S.L."/>
            <person name="Delcher A."/>
            <person name="Utterback T.R."/>
            <person name="Weidman J.F."/>
            <person name="Khouri H.M."/>
            <person name="Gill J."/>
            <person name="Mikula A."/>
            <person name="Bishai W."/>
            <person name="Jacobs W.R. Jr."/>
            <person name="Venter J.C."/>
            <person name="Fraser C.M."/>
        </authorList>
    </citation>
    <scope>NUCLEOTIDE SEQUENCE [LARGE SCALE GENOMIC DNA]</scope>
    <source>
        <strain>CDC 1551 / Oshkosh</strain>
    </source>
</reference>
<protein>
    <recommendedName>
        <fullName>Uncharacterized protein MT0029</fullName>
    </recommendedName>
</protein>
<dbReference type="EMBL" id="AE000516">
    <property type="protein sequence ID" value="AAK44251.1"/>
    <property type="molecule type" value="Genomic_DNA"/>
</dbReference>
<dbReference type="PIR" id="H70700">
    <property type="entry name" value="H70700"/>
</dbReference>
<dbReference type="KEGG" id="mtc:MT0029"/>
<dbReference type="PATRIC" id="fig|83331.31.peg.31"/>
<dbReference type="HOGENOM" id="CLU_562375_0_0_11"/>
<dbReference type="Proteomes" id="UP000001020">
    <property type="component" value="Chromosome"/>
</dbReference>
<dbReference type="InterPro" id="IPR019710">
    <property type="entry name" value="DUF4226"/>
</dbReference>
<dbReference type="Pfam" id="PF10774">
    <property type="entry name" value="DUF4226"/>
    <property type="match status" value="1"/>
</dbReference>
<organism>
    <name type="scientific">Mycobacterium tuberculosis (strain CDC 1551 / Oshkosh)</name>
    <dbReference type="NCBI Taxonomy" id="83331"/>
    <lineage>
        <taxon>Bacteria</taxon>
        <taxon>Bacillati</taxon>
        <taxon>Actinomycetota</taxon>
        <taxon>Actinomycetes</taxon>
        <taxon>Mycobacteriales</taxon>
        <taxon>Mycobacteriaceae</taxon>
        <taxon>Mycobacterium</taxon>
        <taxon>Mycobacterium tuberculosis complex</taxon>
    </lineage>
</organism>
<gene>
    <name type="ordered locus">MT0029</name>
</gene>
<accession>P9WMB0</accession>
<accession>L0T438</accession>
<accession>P71596</accession>
<feature type="chain" id="PRO_0000427335" description="Uncharacterized protein MT0029">
    <location>
        <begin position="1"/>
        <end position="448"/>
    </location>
</feature>
<feature type="region of interest" description="Disordered" evidence="1">
    <location>
        <begin position="187"/>
        <end position="221"/>
    </location>
</feature>
<feature type="region of interest" description="Disordered" evidence="1">
    <location>
        <begin position="243"/>
        <end position="270"/>
    </location>
</feature>
<feature type="region of interest" description="Disordered" evidence="1">
    <location>
        <begin position="291"/>
        <end position="361"/>
    </location>
</feature>
<feature type="compositionally biased region" description="Basic and acidic residues" evidence="1">
    <location>
        <begin position="187"/>
        <end position="198"/>
    </location>
</feature>
<feature type="compositionally biased region" description="Low complexity" evidence="1">
    <location>
        <begin position="243"/>
        <end position="261"/>
    </location>
</feature>
<feature type="compositionally biased region" description="Basic and acidic residues" evidence="1">
    <location>
        <begin position="307"/>
        <end position="334"/>
    </location>
</feature>
<evidence type="ECO:0000256" key="1">
    <source>
        <dbReference type="SAM" id="MobiDB-lite"/>
    </source>
</evidence>
<evidence type="ECO:0000305" key="2"/>